<reference key="1">
    <citation type="journal article" date="2007" name="Mol. Phylogenet. Evol.">
        <title>Phylogenetic and evolutionary implications of complete chloroplast genome sequences of four early-diverging angiosperms: Buxus (Buxaceae), Chloranthus (Chloranthaceae), Dioscorea (Dioscoreaceae), and Illicium (Schisandraceae).</title>
        <authorList>
            <person name="Hansen D.R."/>
            <person name="Dastidar S.G."/>
            <person name="Cai Z."/>
            <person name="Penaflor C."/>
            <person name="Kuehl J.V."/>
            <person name="Boore J.L."/>
            <person name="Jansen R.K."/>
        </authorList>
    </citation>
    <scope>NUCLEOTIDE SEQUENCE [LARGE SCALE GENOMIC DNA]</scope>
</reference>
<name>ATPA_DIOEL</name>
<accession>A6MMJ2</accession>
<sequence>MVTLRADEISNIIRERIEQYNIGVKIVNTGTVLQVGDGIARIHGLDEVMAGELVEFEEGTIGIALNLESNNVGVVLMGDGLMIQEGSSVKATGRIAQIPVSEAYLGRVINALAKPIDGRGEISASESRLIESPAPGIISRRSVYEPLQTGLIAIDSMIPIGRGQRELIIGDRQTGKTAVATDTILNQKGQNVICVYVAIGQKASSVAQVVTTFQERGAMEYTIVVAETADSPATLQYLAPYTGAALAEYFMHREQHTSIIYDDLSKQAQAYRQMSLLLRRPPGREAYPGDVFYLHSRLLERAAKSSSRLGEGSMTALPIVETQSGDVSAYIPTNVISITDGQIFLSADLFNAGIRPAINVGISVSRVGSAAQIKAMKQVAGKSKLELAQFAELEAFAQFASDLDKATQNQLARGQRLRELLKQSQSDPLAVEEQIATIYTGANGYLDPLEIGQVKKFLVQLRTYLKKNKSQFKEIISSTKTFTEEAEALLKGAVQEQIELFLLQEQT</sequence>
<protein>
    <recommendedName>
        <fullName evidence="1">ATP synthase subunit alpha, chloroplastic</fullName>
        <ecNumber evidence="1">7.1.2.2</ecNumber>
    </recommendedName>
    <alternativeName>
        <fullName evidence="1">ATP synthase F1 sector subunit alpha</fullName>
    </alternativeName>
    <alternativeName>
        <fullName evidence="1">F-ATPase subunit alpha</fullName>
    </alternativeName>
</protein>
<organism>
    <name type="scientific">Dioscorea elephantipes</name>
    <name type="common">Elephant's foot yam</name>
    <name type="synonym">Testudinaria elephantipes</name>
    <dbReference type="NCBI Taxonomy" id="145284"/>
    <lineage>
        <taxon>Eukaryota</taxon>
        <taxon>Viridiplantae</taxon>
        <taxon>Streptophyta</taxon>
        <taxon>Embryophyta</taxon>
        <taxon>Tracheophyta</taxon>
        <taxon>Spermatophyta</taxon>
        <taxon>Magnoliopsida</taxon>
        <taxon>Liliopsida</taxon>
        <taxon>Dioscoreales</taxon>
        <taxon>Dioscoreaceae</taxon>
        <taxon>Dioscorea</taxon>
    </lineage>
</organism>
<geneLocation type="chloroplast"/>
<evidence type="ECO:0000255" key="1">
    <source>
        <dbReference type="HAMAP-Rule" id="MF_01346"/>
    </source>
</evidence>
<feature type="chain" id="PRO_0000339085" description="ATP synthase subunit alpha, chloroplastic">
    <location>
        <begin position="1"/>
        <end position="507"/>
    </location>
</feature>
<feature type="binding site" evidence="1">
    <location>
        <begin position="170"/>
        <end position="177"/>
    </location>
    <ligand>
        <name>ATP</name>
        <dbReference type="ChEBI" id="CHEBI:30616"/>
    </ligand>
</feature>
<feature type="site" description="Required for activity" evidence="1">
    <location>
        <position position="363"/>
    </location>
</feature>
<proteinExistence type="inferred from homology"/>
<gene>
    <name evidence="1" type="primary">atpA</name>
</gene>
<dbReference type="EC" id="7.1.2.2" evidence="1"/>
<dbReference type="EMBL" id="EF380353">
    <property type="protein sequence ID" value="ABR01415.1"/>
    <property type="molecule type" value="Genomic_DNA"/>
</dbReference>
<dbReference type="RefSeq" id="YP_001294337.1">
    <property type="nucleotide sequence ID" value="NC_009601.1"/>
</dbReference>
<dbReference type="SMR" id="A6MMJ2"/>
<dbReference type="GeneID" id="5236601"/>
<dbReference type="GO" id="GO:0009535">
    <property type="term" value="C:chloroplast thylakoid membrane"/>
    <property type="evidence" value="ECO:0007669"/>
    <property type="project" value="UniProtKB-SubCell"/>
</dbReference>
<dbReference type="GO" id="GO:0045259">
    <property type="term" value="C:proton-transporting ATP synthase complex"/>
    <property type="evidence" value="ECO:0007669"/>
    <property type="project" value="UniProtKB-KW"/>
</dbReference>
<dbReference type="GO" id="GO:0043531">
    <property type="term" value="F:ADP binding"/>
    <property type="evidence" value="ECO:0007669"/>
    <property type="project" value="TreeGrafter"/>
</dbReference>
<dbReference type="GO" id="GO:0005524">
    <property type="term" value="F:ATP binding"/>
    <property type="evidence" value="ECO:0007669"/>
    <property type="project" value="UniProtKB-UniRule"/>
</dbReference>
<dbReference type="GO" id="GO:0046933">
    <property type="term" value="F:proton-transporting ATP synthase activity, rotational mechanism"/>
    <property type="evidence" value="ECO:0007669"/>
    <property type="project" value="UniProtKB-UniRule"/>
</dbReference>
<dbReference type="CDD" id="cd18113">
    <property type="entry name" value="ATP-synt_F1_alpha_C"/>
    <property type="match status" value="1"/>
</dbReference>
<dbReference type="CDD" id="cd18116">
    <property type="entry name" value="ATP-synt_F1_alpha_N"/>
    <property type="match status" value="1"/>
</dbReference>
<dbReference type="CDD" id="cd01132">
    <property type="entry name" value="F1-ATPase_alpha_CD"/>
    <property type="match status" value="1"/>
</dbReference>
<dbReference type="FunFam" id="1.20.150.20:FF:000001">
    <property type="entry name" value="ATP synthase subunit alpha"/>
    <property type="match status" value="1"/>
</dbReference>
<dbReference type="FunFam" id="2.40.30.20:FF:000001">
    <property type="entry name" value="ATP synthase subunit alpha"/>
    <property type="match status" value="1"/>
</dbReference>
<dbReference type="FunFam" id="3.40.50.300:FF:000002">
    <property type="entry name" value="ATP synthase subunit alpha"/>
    <property type="match status" value="1"/>
</dbReference>
<dbReference type="Gene3D" id="2.40.30.20">
    <property type="match status" value="1"/>
</dbReference>
<dbReference type="Gene3D" id="1.20.150.20">
    <property type="entry name" value="ATP synthase alpha/beta chain, C-terminal domain"/>
    <property type="match status" value="1"/>
</dbReference>
<dbReference type="Gene3D" id="3.40.50.300">
    <property type="entry name" value="P-loop containing nucleotide triphosphate hydrolases"/>
    <property type="match status" value="1"/>
</dbReference>
<dbReference type="HAMAP" id="MF_01346">
    <property type="entry name" value="ATP_synth_alpha_bact"/>
    <property type="match status" value="1"/>
</dbReference>
<dbReference type="InterPro" id="IPR023366">
    <property type="entry name" value="ATP_synth_asu-like_sf"/>
</dbReference>
<dbReference type="InterPro" id="IPR000793">
    <property type="entry name" value="ATP_synth_asu_C"/>
</dbReference>
<dbReference type="InterPro" id="IPR038376">
    <property type="entry name" value="ATP_synth_asu_C_sf"/>
</dbReference>
<dbReference type="InterPro" id="IPR033732">
    <property type="entry name" value="ATP_synth_F1_a_nt-bd_dom"/>
</dbReference>
<dbReference type="InterPro" id="IPR005294">
    <property type="entry name" value="ATP_synth_F1_asu"/>
</dbReference>
<dbReference type="InterPro" id="IPR020003">
    <property type="entry name" value="ATPase_a/bsu_AS"/>
</dbReference>
<dbReference type="InterPro" id="IPR004100">
    <property type="entry name" value="ATPase_F1/V1/A1_a/bsu_N"/>
</dbReference>
<dbReference type="InterPro" id="IPR036121">
    <property type="entry name" value="ATPase_F1/V1/A1_a/bsu_N_sf"/>
</dbReference>
<dbReference type="InterPro" id="IPR000194">
    <property type="entry name" value="ATPase_F1/V1/A1_a/bsu_nucl-bd"/>
</dbReference>
<dbReference type="InterPro" id="IPR027417">
    <property type="entry name" value="P-loop_NTPase"/>
</dbReference>
<dbReference type="NCBIfam" id="TIGR00962">
    <property type="entry name" value="atpA"/>
    <property type="match status" value="1"/>
</dbReference>
<dbReference type="NCBIfam" id="NF009884">
    <property type="entry name" value="PRK13343.1"/>
    <property type="match status" value="1"/>
</dbReference>
<dbReference type="PANTHER" id="PTHR48082">
    <property type="entry name" value="ATP SYNTHASE SUBUNIT ALPHA, MITOCHONDRIAL"/>
    <property type="match status" value="1"/>
</dbReference>
<dbReference type="PANTHER" id="PTHR48082:SF2">
    <property type="entry name" value="ATP SYNTHASE SUBUNIT ALPHA, MITOCHONDRIAL"/>
    <property type="match status" value="1"/>
</dbReference>
<dbReference type="Pfam" id="PF00006">
    <property type="entry name" value="ATP-synt_ab"/>
    <property type="match status" value="1"/>
</dbReference>
<dbReference type="Pfam" id="PF00306">
    <property type="entry name" value="ATP-synt_ab_C"/>
    <property type="match status" value="1"/>
</dbReference>
<dbReference type="Pfam" id="PF02874">
    <property type="entry name" value="ATP-synt_ab_N"/>
    <property type="match status" value="1"/>
</dbReference>
<dbReference type="PIRSF" id="PIRSF039088">
    <property type="entry name" value="F_ATPase_subunit_alpha"/>
    <property type="match status" value="1"/>
</dbReference>
<dbReference type="SUPFAM" id="SSF47917">
    <property type="entry name" value="C-terminal domain of alpha and beta subunits of F1 ATP synthase"/>
    <property type="match status" value="1"/>
</dbReference>
<dbReference type="SUPFAM" id="SSF50615">
    <property type="entry name" value="N-terminal domain of alpha and beta subunits of F1 ATP synthase"/>
    <property type="match status" value="1"/>
</dbReference>
<dbReference type="SUPFAM" id="SSF52540">
    <property type="entry name" value="P-loop containing nucleoside triphosphate hydrolases"/>
    <property type="match status" value="1"/>
</dbReference>
<dbReference type="PROSITE" id="PS00152">
    <property type="entry name" value="ATPASE_ALPHA_BETA"/>
    <property type="match status" value="1"/>
</dbReference>
<comment type="function">
    <text evidence="1">Produces ATP from ADP in the presence of a proton gradient across the membrane. The alpha chain is a regulatory subunit.</text>
</comment>
<comment type="catalytic activity">
    <reaction evidence="1">
        <text>ATP + H2O + 4 H(+)(in) = ADP + phosphate + 5 H(+)(out)</text>
        <dbReference type="Rhea" id="RHEA:57720"/>
        <dbReference type="ChEBI" id="CHEBI:15377"/>
        <dbReference type="ChEBI" id="CHEBI:15378"/>
        <dbReference type="ChEBI" id="CHEBI:30616"/>
        <dbReference type="ChEBI" id="CHEBI:43474"/>
        <dbReference type="ChEBI" id="CHEBI:456216"/>
        <dbReference type="EC" id="7.1.2.2"/>
    </reaction>
</comment>
<comment type="subunit">
    <text evidence="1">F-type ATPases have 2 components, CF(1) - the catalytic core - and CF(0) - the membrane proton channel. CF(1) has five subunits: alpha(3), beta(3), gamma(1), delta(1), epsilon(1). CF(0) has four main subunits: a, b, b' and c.</text>
</comment>
<comment type="subcellular location">
    <subcellularLocation>
        <location evidence="1">Plastid</location>
        <location evidence="1">Chloroplast thylakoid membrane</location>
        <topology evidence="1">Peripheral membrane protein</topology>
    </subcellularLocation>
</comment>
<comment type="similarity">
    <text evidence="1">Belongs to the ATPase alpha/beta chains family.</text>
</comment>
<keyword id="KW-0066">ATP synthesis</keyword>
<keyword id="KW-0067">ATP-binding</keyword>
<keyword id="KW-0139">CF(1)</keyword>
<keyword id="KW-0150">Chloroplast</keyword>
<keyword id="KW-0375">Hydrogen ion transport</keyword>
<keyword id="KW-0406">Ion transport</keyword>
<keyword id="KW-0472">Membrane</keyword>
<keyword id="KW-0547">Nucleotide-binding</keyword>
<keyword id="KW-0934">Plastid</keyword>
<keyword id="KW-0793">Thylakoid</keyword>
<keyword id="KW-1278">Translocase</keyword>
<keyword id="KW-0813">Transport</keyword>